<dbReference type="EMBL" id="U00096">
    <property type="protein sequence ID" value="AAC75486.2"/>
    <property type="molecule type" value="Genomic_DNA"/>
</dbReference>
<dbReference type="EMBL" id="AP009048">
    <property type="protein sequence ID" value="BAE76713.1"/>
    <property type="molecule type" value="Genomic_DNA"/>
</dbReference>
<dbReference type="PIR" id="H65017">
    <property type="entry name" value="H65017"/>
</dbReference>
<dbReference type="RefSeq" id="NP_416928.4">
    <property type="nucleotide sequence ID" value="NC_000913.3"/>
</dbReference>
<dbReference type="RefSeq" id="WP_001350539.1">
    <property type="nucleotide sequence ID" value="NZ_LN832404.1"/>
</dbReference>
<dbReference type="BioGRID" id="4260753">
    <property type="interactions" value="17"/>
</dbReference>
<dbReference type="DIP" id="DIP-12023N"/>
<dbReference type="FunCoup" id="P76538">
    <property type="interactions" value="93"/>
</dbReference>
<dbReference type="IntAct" id="P76538">
    <property type="interactions" value="4"/>
</dbReference>
<dbReference type="STRING" id="511145.b2433"/>
<dbReference type="TCDB" id="9.B.127.1.1">
    <property type="family name" value="the duf2919 (pf11143) family"/>
</dbReference>
<dbReference type="PaxDb" id="511145-b2433"/>
<dbReference type="EnsemblBacteria" id="AAC75486">
    <property type="protein sequence ID" value="AAC75486"/>
    <property type="gene ID" value="b2433"/>
</dbReference>
<dbReference type="GeneID" id="946918"/>
<dbReference type="KEGG" id="ecj:JW2426"/>
<dbReference type="KEGG" id="eco:b2433"/>
<dbReference type="KEGG" id="ecoc:C3026_13515"/>
<dbReference type="PATRIC" id="fig|1411691.4.peg.4298"/>
<dbReference type="EchoBASE" id="EB3919"/>
<dbReference type="eggNOG" id="ENOG5032RZ4">
    <property type="taxonomic scope" value="Bacteria"/>
</dbReference>
<dbReference type="HOGENOM" id="CLU_115420_1_0_6"/>
<dbReference type="InParanoid" id="P76538"/>
<dbReference type="OMA" id="CWQPVLW"/>
<dbReference type="OrthoDB" id="6314776at2"/>
<dbReference type="PhylomeDB" id="P76538"/>
<dbReference type="BioCyc" id="EcoCyc:G7268-MONOMER"/>
<dbReference type="PRO" id="PR:P76538"/>
<dbReference type="Proteomes" id="UP000000625">
    <property type="component" value="Chromosome"/>
</dbReference>
<dbReference type="GO" id="GO:0005886">
    <property type="term" value="C:plasma membrane"/>
    <property type="evidence" value="ECO:0000314"/>
    <property type="project" value="EcoCyc"/>
</dbReference>
<dbReference type="InterPro" id="IPR021318">
    <property type="entry name" value="DUF2919"/>
</dbReference>
<dbReference type="Pfam" id="PF11143">
    <property type="entry name" value="DUF2919"/>
    <property type="match status" value="1"/>
</dbReference>
<sequence>MKSTEFHPVHYDAHGRLRLPLLFWLVLLLQARTWVLFVIAGASREQGTALLNLFYPDHDNFWLGLIPGIPAVLAFLLSGRRATFPRTWRVLYFLLLLAQVVLLCWQPWLWLNGESVSGIGLALVVADIVALIWLLTNRRLRACFYEVKE</sequence>
<accession>P76538</accession>
<accession>Q2MAJ3</accession>
<comment type="subcellular location">
    <subcellularLocation>
        <location>Cell inner membrane</location>
        <topology>Multi-pass membrane protein</topology>
    </subcellularLocation>
</comment>
<gene>
    <name type="primary">yfeZ</name>
    <name type="ordered locus">b2433</name>
    <name type="ordered locus">JW2426</name>
</gene>
<organism>
    <name type="scientific">Escherichia coli (strain K12)</name>
    <dbReference type="NCBI Taxonomy" id="83333"/>
    <lineage>
        <taxon>Bacteria</taxon>
        <taxon>Pseudomonadati</taxon>
        <taxon>Pseudomonadota</taxon>
        <taxon>Gammaproteobacteria</taxon>
        <taxon>Enterobacterales</taxon>
        <taxon>Enterobacteriaceae</taxon>
        <taxon>Escherichia</taxon>
    </lineage>
</organism>
<reference key="1">
    <citation type="journal article" date="1997" name="Science">
        <title>The complete genome sequence of Escherichia coli K-12.</title>
        <authorList>
            <person name="Blattner F.R."/>
            <person name="Plunkett G. III"/>
            <person name="Bloch C.A."/>
            <person name="Perna N.T."/>
            <person name="Burland V."/>
            <person name="Riley M."/>
            <person name="Collado-Vides J."/>
            <person name="Glasner J.D."/>
            <person name="Rode C.K."/>
            <person name="Mayhew G.F."/>
            <person name="Gregor J."/>
            <person name="Davis N.W."/>
            <person name="Kirkpatrick H.A."/>
            <person name="Goeden M.A."/>
            <person name="Rose D.J."/>
            <person name="Mau B."/>
            <person name="Shao Y."/>
        </authorList>
    </citation>
    <scope>NUCLEOTIDE SEQUENCE [LARGE SCALE GENOMIC DNA]</scope>
    <source>
        <strain>K12 / MG1655 / ATCC 47076</strain>
    </source>
</reference>
<reference key="2">
    <citation type="journal article" date="2006" name="Mol. Syst. Biol.">
        <title>Highly accurate genome sequences of Escherichia coli K-12 strains MG1655 and W3110.</title>
        <authorList>
            <person name="Hayashi K."/>
            <person name="Morooka N."/>
            <person name="Yamamoto Y."/>
            <person name="Fujita K."/>
            <person name="Isono K."/>
            <person name="Choi S."/>
            <person name="Ohtsubo E."/>
            <person name="Baba T."/>
            <person name="Wanner B.L."/>
            <person name="Mori H."/>
            <person name="Horiuchi T."/>
        </authorList>
    </citation>
    <scope>NUCLEOTIDE SEQUENCE [LARGE SCALE GENOMIC DNA]</scope>
    <source>
        <strain>K12 / W3110 / ATCC 27325 / DSM 5911</strain>
    </source>
</reference>
<reference key="3">
    <citation type="journal article" date="2005" name="Science">
        <title>Global topology analysis of the Escherichia coli inner membrane proteome.</title>
        <authorList>
            <person name="Daley D.O."/>
            <person name="Rapp M."/>
            <person name="Granseth E."/>
            <person name="Melen K."/>
            <person name="Drew D."/>
            <person name="von Heijne G."/>
        </authorList>
    </citation>
    <scope>TOPOLOGY [LARGE SCALE ANALYSIS]</scope>
    <source>
        <strain>K12 / MG1655 / ATCC 47076</strain>
    </source>
</reference>
<evidence type="ECO:0000255" key="1"/>
<proteinExistence type="evidence at protein level"/>
<keyword id="KW-0997">Cell inner membrane</keyword>
<keyword id="KW-1003">Cell membrane</keyword>
<keyword id="KW-0472">Membrane</keyword>
<keyword id="KW-1185">Reference proteome</keyword>
<keyword id="KW-0812">Transmembrane</keyword>
<keyword id="KW-1133">Transmembrane helix</keyword>
<protein>
    <recommendedName>
        <fullName>Inner membrane protein YfeZ</fullName>
    </recommendedName>
</protein>
<feature type="chain" id="PRO_0000169226" description="Inner membrane protein YfeZ">
    <location>
        <begin position="1"/>
        <end position="149"/>
    </location>
</feature>
<feature type="topological domain" description="Cytoplasmic" evidence="1">
    <location>
        <begin position="1"/>
        <end position="18"/>
    </location>
</feature>
<feature type="transmembrane region" description="Helical" evidence="1">
    <location>
        <begin position="19"/>
        <end position="39"/>
    </location>
</feature>
<feature type="topological domain" description="Periplasmic" evidence="1">
    <location>
        <begin position="40"/>
        <end position="58"/>
    </location>
</feature>
<feature type="transmembrane region" description="Helical" evidence="1">
    <location>
        <begin position="59"/>
        <end position="79"/>
    </location>
</feature>
<feature type="topological domain" description="Cytoplasmic" evidence="1">
    <location>
        <begin position="80"/>
        <end position="89"/>
    </location>
</feature>
<feature type="transmembrane region" description="Helical" evidence="1">
    <location>
        <begin position="90"/>
        <end position="110"/>
    </location>
</feature>
<feature type="topological domain" description="Periplasmic" evidence="1">
    <location>
        <begin position="111"/>
        <end position="115"/>
    </location>
</feature>
<feature type="transmembrane region" description="Helical" evidence="1">
    <location>
        <begin position="116"/>
        <end position="136"/>
    </location>
</feature>
<feature type="topological domain" description="Cytoplasmic" evidence="1">
    <location>
        <begin position="137"/>
        <end position="149"/>
    </location>
</feature>
<name>YFEZ_ECOLI</name>